<sequence length="293" mass="32745">MTISVPATSANLGPGFDTLGLALELKNRFSIKPSSLSSIQIRGEGSKNPKLRVDNIFVRIFQETFAKLTEERTNFRFQFHNQIPISRGLGSSSAVIIGAISAAFMMAQKKATPEEILSLALAYESHPDNITPACVGGFTVATTRENSVFYIQKPLPDSIKAVVVIPHRPTSTSYSRQTLPKRYSMRDSVFNLSRSSLLTAAFFSERWDLLREASRDRFHQEIRMKQFPALFEVQHTALKEGALMSTLSGSGSSFFNLCLKEDAPSLAQKLQDRFPKFRVLELKFDNKGVVRDD</sequence>
<organism>
    <name type="scientific">Wolinella succinogenes (strain ATCC 29543 / DSM 1740 / CCUG 13145 / JCM 31913 / LMG 7466 / NCTC 11488 / FDC 602W)</name>
    <name type="common">Vibrio succinogenes</name>
    <dbReference type="NCBI Taxonomy" id="273121"/>
    <lineage>
        <taxon>Bacteria</taxon>
        <taxon>Pseudomonadati</taxon>
        <taxon>Campylobacterota</taxon>
        <taxon>Epsilonproteobacteria</taxon>
        <taxon>Campylobacterales</taxon>
        <taxon>Helicobacteraceae</taxon>
        <taxon>Wolinella</taxon>
    </lineage>
</organism>
<accession>Q7M7X6</accession>
<evidence type="ECO:0000255" key="1">
    <source>
        <dbReference type="HAMAP-Rule" id="MF_00384"/>
    </source>
</evidence>
<keyword id="KW-0028">Amino-acid biosynthesis</keyword>
<keyword id="KW-0067">ATP-binding</keyword>
<keyword id="KW-0963">Cytoplasm</keyword>
<keyword id="KW-0418">Kinase</keyword>
<keyword id="KW-0547">Nucleotide-binding</keyword>
<keyword id="KW-1185">Reference proteome</keyword>
<keyword id="KW-0791">Threonine biosynthesis</keyword>
<keyword id="KW-0808">Transferase</keyword>
<gene>
    <name evidence="1" type="primary">thrB</name>
    <name type="ordered locus">WS2015</name>
</gene>
<proteinExistence type="inferred from homology"/>
<protein>
    <recommendedName>
        <fullName evidence="1">Homoserine kinase</fullName>
        <shortName evidence="1">HK</shortName>
        <shortName evidence="1">HSK</shortName>
        <ecNumber evidence="1">2.7.1.39</ecNumber>
    </recommendedName>
</protein>
<reference key="1">
    <citation type="journal article" date="2003" name="Proc. Natl. Acad. Sci. U.S.A.">
        <title>Complete genome sequence and analysis of Wolinella succinogenes.</title>
        <authorList>
            <person name="Baar C."/>
            <person name="Eppinger M."/>
            <person name="Raddatz G."/>
            <person name="Simon J."/>
            <person name="Lanz C."/>
            <person name="Klimmek O."/>
            <person name="Nandakumar R."/>
            <person name="Gross R."/>
            <person name="Rosinus A."/>
            <person name="Keller H."/>
            <person name="Jagtap P."/>
            <person name="Linke B."/>
            <person name="Meyer F."/>
            <person name="Lederer H."/>
            <person name="Schuster S.C."/>
        </authorList>
    </citation>
    <scope>NUCLEOTIDE SEQUENCE [LARGE SCALE GENOMIC DNA]</scope>
    <source>
        <strain>ATCC 29543 / DSM 1740 / CCUG 13145 / JCM 31913 / LMG 7466 / NCTC 11488 / FDC 602W</strain>
    </source>
</reference>
<dbReference type="EC" id="2.7.1.39" evidence="1"/>
<dbReference type="EMBL" id="BX571662">
    <property type="protein sequence ID" value="CAE11017.1"/>
    <property type="molecule type" value="Genomic_DNA"/>
</dbReference>
<dbReference type="RefSeq" id="WP_011139799.1">
    <property type="nucleotide sequence ID" value="NC_005090.1"/>
</dbReference>
<dbReference type="SMR" id="Q7M7X6"/>
<dbReference type="STRING" id="273121.WS2015"/>
<dbReference type="KEGG" id="wsu:WS2015"/>
<dbReference type="eggNOG" id="COG0083">
    <property type="taxonomic scope" value="Bacteria"/>
</dbReference>
<dbReference type="HOGENOM" id="CLU_041243_0_0_7"/>
<dbReference type="UniPathway" id="UPA00050">
    <property type="reaction ID" value="UER00064"/>
</dbReference>
<dbReference type="Proteomes" id="UP000000422">
    <property type="component" value="Chromosome"/>
</dbReference>
<dbReference type="GO" id="GO:0005737">
    <property type="term" value="C:cytoplasm"/>
    <property type="evidence" value="ECO:0007669"/>
    <property type="project" value="UniProtKB-SubCell"/>
</dbReference>
<dbReference type="GO" id="GO:0005524">
    <property type="term" value="F:ATP binding"/>
    <property type="evidence" value="ECO:0007669"/>
    <property type="project" value="UniProtKB-UniRule"/>
</dbReference>
<dbReference type="GO" id="GO:0004413">
    <property type="term" value="F:homoserine kinase activity"/>
    <property type="evidence" value="ECO:0007669"/>
    <property type="project" value="UniProtKB-UniRule"/>
</dbReference>
<dbReference type="GO" id="GO:0009088">
    <property type="term" value="P:threonine biosynthetic process"/>
    <property type="evidence" value="ECO:0007669"/>
    <property type="project" value="UniProtKB-UniRule"/>
</dbReference>
<dbReference type="Gene3D" id="3.30.230.10">
    <property type="match status" value="1"/>
</dbReference>
<dbReference type="Gene3D" id="3.30.70.890">
    <property type="entry name" value="GHMP kinase, C-terminal domain"/>
    <property type="match status" value="1"/>
</dbReference>
<dbReference type="HAMAP" id="MF_00384">
    <property type="entry name" value="Homoser_kinase"/>
    <property type="match status" value="1"/>
</dbReference>
<dbReference type="InterPro" id="IPR013750">
    <property type="entry name" value="GHMP_kinase_C_dom"/>
</dbReference>
<dbReference type="InterPro" id="IPR036554">
    <property type="entry name" value="GHMP_kinase_C_sf"/>
</dbReference>
<dbReference type="InterPro" id="IPR006204">
    <property type="entry name" value="GHMP_kinase_N_dom"/>
</dbReference>
<dbReference type="InterPro" id="IPR006203">
    <property type="entry name" value="GHMP_knse_ATP-bd_CS"/>
</dbReference>
<dbReference type="InterPro" id="IPR000870">
    <property type="entry name" value="Homoserine_kinase"/>
</dbReference>
<dbReference type="InterPro" id="IPR020568">
    <property type="entry name" value="Ribosomal_Su5_D2-typ_SF"/>
</dbReference>
<dbReference type="InterPro" id="IPR014721">
    <property type="entry name" value="Ribsml_uS5_D2-typ_fold_subgr"/>
</dbReference>
<dbReference type="NCBIfam" id="TIGR00191">
    <property type="entry name" value="thrB"/>
    <property type="match status" value="1"/>
</dbReference>
<dbReference type="PANTHER" id="PTHR20861:SF1">
    <property type="entry name" value="HOMOSERINE KINASE"/>
    <property type="match status" value="1"/>
</dbReference>
<dbReference type="PANTHER" id="PTHR20861">
    <property type="entry name" value="HOMOSERINE/4-DIPHOSPHOCYTIDYL-2-C-METHYL-D-ERYTHRITOL KINASE"/>
    <property type="match status" value="1"/>
</dbReference>
<dbReference type="Pfam" id="PF08544">
    <property type="entry name" value="GHMP_kinases_C"/>
    <property type="match status" value="1"/>
</dbReference>
<dbReference type="Pfam" id="PF00288">
    <property type="entry name" value="GHMP_kinases_N"/>
    <property type="match status" value="1"/>
</dbReference>
<dbReference type="PIRSF" id="PIRSF000676">
    <property type="entry name" value="Homoser_kin"/>
    <property type="match status" value="1"/>
</dbReference>
<dbReference type="PRINTS" id="PR00958">
    <property type="entry name" value="HOMSERKINASE"/>
</dbReference>
<dbReference type="SUPFAM" id="SSF55060">
    <property type="entry name" value="GHMP Kinase, C-terminal domain"/>
    <property type="match status" value="1"/>
</dbReference>
<dbReference type="SUPFAM" id="SSF54211">
    <property type="entry name" value="Ribosomal protein S5 domain 2-like"/>
    <property type="match status" value="1"/>
</dbReference>
<dbReference type="PROSITE" id="PS00627">
    <property type="entry name" value="GHMP_KINASES_ATP"/>
    <property type="match status" value="1"/>
</dbReference>
<comment type="function">
    <text evidence="1">Catalyzes the ATP-dependent phosphorylation of L-homoserine to L-homoserine phosphate.</text>
</comment>
<comment type="catalytic activity">
    <reaction evidence="1">
        <text>L-homoserine + ATP = O-phospho-L-homoserine + ADP + H(+)</text>
        <dbReference type="Rhea" id="RHEA:13985"/>
        <dbReference type="ChEBI" id="CHEBI:15378"/>
        <dbReference type="ChEBI" id="CHEBI:30616"/>
        <dbReference type="ChEBI" id="CHEBI:57476"/>
        <dbReference type="ChEBI" id="CHEBI:57590"/>
        <dbReference type="ChEBI" id="CHEBI:456216"/>
        <dbReference type="EC" id="2.7.1.39"/>
    </reaction>
</comment>
<comment type="pathway">
    <text evidence="1">Amino-acid biosynthesis; L-threonine biosynthesis; L-threonine from L-aspartate: step 4/5.</text>
</comment>
<comment type="subcellular location">
    <subcellularLocation>
        <location evidence="1">Cytoplasm</location>
    </subcellularLocation>
</comment>
<comment type="similarity">
    <text evidence="1">Belongs to the GHMP kinase family. Homoserine kinase subfamily.</text>
</comment>
<name>KHSE_WOLSU</name>
<feature type="chain" id="PRO_0000156632" description="Homoserine kinase">
    <location>
        <begin position="1"/>
        <end position="293"/>
    </location>
</feature>
<feature type="binding site" evidence="1">
    <location>
        <begin position="84"/>
        <end position="94"/>
    </location>
    <ligand>
        <name>ATP</name>
        <dbReference type="ChEBI" id="CHEBI:30616"/>
    </ligand>
</feature>